<dbReference type="EMBL" id="AJ537509">
    <property type="protein sequence ID" value="CAD61096.1"/>
    <property type="molecule type" value="mRNA"/>
</dbReference>
<dbReference type="EMBL" id="AL645782">
    <property type="protein sequence ID" value="CAD59116.1"/>
    <property type="molecule type" value="Genomic_DNA"/>
</dbReference>
<dbReference type="EMBL" id="BC095559">
    <property type="protein sequence ID" value="AAH95559.1"/>
    <property type="molecule type" value="mRNA"/>
</dbReference>
<dbReference type="EMBL" id="Y13944">
    <property type="protein sequence ID" value="CAA74282.2"/>
    <property type="molecule type" value="mRNA"/>
</dbReference>
<dbReference type="EMBL" id="BK005081">
    <property type="protein sequence ID" value="DAA05213.1"/>
    <property type="molecule type" value="mRNA"/>
</dbReference>
<dbReference type="EMBL" id="BK005082">
    <property type="protein sequence ID" value="DAA05214.1"/>
    <property type="molecule type" value="mRNA"/>
</dbReference>
<dbReference type="RefSeq" id="NP_571192.2">
    <property type="nucleotide sequence ID" value="NM_131117.3"/>
</dbReference>
<dbReference type="RefSeq" id="XP_005171611.1">
    <property type="nucleotide sequence ID" value="XM_005171554.4"/>
</dbReference>
<dbReference type="RefSeq" id="XP_005171619.1">
    <property type="nucleotide sequence ID" value="XM_005171562.5"/>
</dbReference>
<dbReference type="RefSeq" id="XP_017208627.1">
    <property type="nucleotide sequence ID" value="XM_017353138.3"/>
</dbReference>
<dbReference type="RefSeq" id="XP_017208629.1">
    <property type="nucleotide sequence ID" value="XM_017353140.3"/>
</dbReference>
<dbReference type="RefSeq" id="XP_017208630.1">
    <property type="nucleotide sequence ID" value="XM_017353141.3"/>
</dbReference>
<dbReference type="RefSeq" id="XP_017208632.1">
    <property type="nucleotide sequence ID" value="XM_017353143.3"/>
</dbReference>
<dbReference type="RefSeq" id="XP_021324980.1">
    <property type="nucleotide sequence ID" value="XM_021469305.2"/>
</dbReference>
<dbReference type="RefSeq" id="XP_021324981.1">
    <property type="nucleotide sequence ID" value="XM_021469306.2"/>
</dbReference>
<dbReference type="RefSeq" id="XP_021324982.1">
    <property type="nucleotide sequence ID" value="XM_021469307.2"/>
</dbReference>
<dbReference type="RefSeq" id="XP_068071841.1">
    <property type="nucleotide sequence ID" value="XM_068215740.1"/>
</dbReference>
<dbReference type="RefSeq" id="XP_068071842.1">
    <property type="nucleotide sequence ID" value="XM_068215741.1"/>
</dbReference>
<dbReference type="SMR" id="O42368"/>
<dbReference type="FunCoup" id="O42368">
    <property type="interactions" value="592"/>
</dbReference>
<dbReference type="STRING" id="7955.ENSDARP00000072928"/>
<dbReference type="PaxDb" id="7955-ENSDARP00000072928"/>
<dbReference type="Ensembl" id="ENSDART00000078466">
    <property type="protein sequence ID" value="ENSDARP00000072928"/>
    <property type="gene ID" value="ENSDARG00000029263"/>
</dbReference>
<dbReference type="Ensembl" id="ENSDART00000153512">
    <property type="protein sequence ID" value="ENSDARP00000128207"/>
    <property type="gene ID" value="ENSDARG00000029263"/>
</dbReference>
<dbReference type="Ensembl" id="ENSDART00000174580">
    <property type="protein sequence ID" value="ENSDARP00000144466"/>
    <property type="gene ID" value="ENSDARG00000029263"/>
</dbReference>
<dbReference type="Ensembl" id="ENSDART00000182247">
    <property type="protein sequence ID" value="ENSDARP00000156821"/>
    <property type="gene ID" value="ENSDARG00000029263"/>
</dbReference>
<dbReference type="Ensembl" id="ENSDART00000184299">
    <property type="protein sequence ID" value="ENSDARP00000155326"/>
    <property type="gene ID" value="ENSDARG00000029263"/>
</dbReference>
<dbReference type="Ensembl" id="ENSDART00000187409">
    <property type="protein sequence ID" value="ENSDARP00000153325"/>
    <property type="gene ID" value="ENSDARG00000029263"/>
</dbReference>
<dbReference type="GeneID" id="30339"/>
<dbReference type="KEGG" id="dre:30339"/>
<dbReference type="AGR" id="ZFIN:ZDB-GENE-990415-104"/>
<dbReference type="CTD" id="30339"/>
<dbReference type="ZFIN" id="ZDB-GENE-990415-104">
    <property type="gene designation" value="hoxb3a"/>
</dbReference>
<dbReference type="eggNOG" id="KOG0489">
    <property type="taxonomic scope" value="Eukaryota"/>
</dbReference>
<dbReference type="HOGENOM" id="CLU_051508_1_0_1"/>
<dbReference type="InParanoid" id="O42368"/>
<dbReference type="OMA" id="GCAAPQK"/>
<dbReference type="OrthoDB" id="6159439at2759"/>
<dbReference type="PhylomeDB" id="O42368"/>
<dbReference type="TreeFam" id="TF315938"/>
<dbReference type="PRO" id="PR:O42368"/>
<dbReference type="Proteomes" id="UP000000437">
    <property type="component" value="Chromosome 3"/>
</dbReference>
<dbReference type="Bgee" id="ENSDARG00000029263">
    <property type="expression patterns" value="Expressed in rhombomere 6 and 41 other cell types or tissues"/>
</dbReference>
<dbReference type="ExpressionAtlas" id="O42368">
    <property type="expression patterns" value="baseline and differential"/>
</dbReference>
<dbReference type="GO" id="GO:0005634">
    <property type="term" value="C:nucleus"/>
    <property type="evidence" value="ECO:0000318"/>
    <property type="project" value="GO_Central"/>
</dbReference>
<dbReference type="GO" id="GO:0000981">
    <property type="term" value="F:DNA-binding transcription factor activity, RNA polymerase II-specific"/>
    <property type="evidence" value="ECO:0000318"/>
    <property type="project" value="GO_Central"/>
</dbReference>
<dbReference type="GO" id="GO:0000978">
    <property type="term" value="F:RNA polymerase II cis-regulatory region sequence-specific DNA binding"/>
    <property type="evidence" value="ECO:0000318"/>
    <property type="project" value="GO_Central"/>
</dbReference>
<dbReference type="GO" id="GO:0009952">
    <property type="term" value="P:anterior/posterior pattern specification"/>
    <property type="evidence" value="ECO:0000318"/>
    <property type="project" value="GO_Central"/>
</dbReference>
<dbReference type="GO" id="GO:0048704">
    <property type="term" value="P:embryonic skeletal system morphogenesis"/>
    <property type="evidence" value="ECO:0000318"/>
    <property type="project" value="GO_Central"/>
</dbReference>
<dbReference type="GO" id="GO:0006357">
    <property type="term" value="P:regulation of transcription by RNA polymerase II"/>
    <property type="evidence" value="ECO:0000318"/>
    <property type="project" value="GO_Central"/>
</dbReference>
<dbReference type="CDD" id="cd00086">
    <property type="entry name" value="homeodomain"/>
    <property type="match status" value="1"/>
</dbReference>
<dbReference type="FunFam" id="1.10.10.60:FF:000094">
    <property type="entry name" value="Homeobox protein Hox-A3"/>
    <property type="match status" value="1"/>
</dbReference>
<dbReference type="Gene3D" id="1.10.10.60">
    <property type="entry name" value="Homeodomain-like"/>
    <property type="match status" value="1"/>
</dbReference>
<dbReference type="InterPro" id="IPR025281">
    <property type="entry name" value="DUF4074"/>
</dbReference>
<dbReference type="InterPro" id="IPR001356">
    <property type="entry name" value="HD"/>
</dbReference>
<dbReference type="InterPro" id="IPR020479">
    <property type="entry name" value="HD_metazoa"/>
</dbReference>
<dbReference type="InterPro" id="IPR001827">
    <property type="entry name" value="Homeobox_Antennapedia_CS"/>
</dbReference>
<dbReference type="InterPro" id="IPR017970">
    <property type="entry name" value="Homeobox_CS"/>
</dbReference>
<dbReference type="InterPro" id="IPR009057">
    <property type="entry name" value="Homeodomain-like_sf"/>
</dbReference>
<dbReference type="PANTHER" id="PTHR45664:SF11">
    <property type="entry name" value="HOMEOBOX PROTEIN HOX-B3"/>
    <property type="match status" value="1"/>
</dbReference>
<dbReference type="PANTHER" id="PTHR45664">
    <property type="entry name" value="PROTEIN ZERKNUELLT 1-RELATED"/>
    <property type="match status" value="1"/>
</dbReference>
<dbReference type="Pfam" id="PF13293">
    <property type="entry name" value="DUF4074"/>
    <property type="match status" value="1"/>
</dbReference>
<dbReference type="Pfam" id="PF00046">
    <property type="entry name" value="Homeodomain"/>
    <property type="match status" value="1"/>
</dbReference>
<dbReference type="PRINTS" id="PR00024">
    <property type="entry name" value="HOMEOBOX"/>
</dbReference>
<dbReference type="SMART" id="SM00389">
    <property type="entry name" value="HOX"/>
    <property type="match status" value="1"/>
</dbReference>
<dbReference type="SUPFAM" id="SSF46689">
    <property type="entry name" value="Homeodomain-like"/>
    <property type="match status" value="1"/>
</dbReference>
<dbReference type="PROSITE" id="PS00032">
    <property type="entry name" value="ANTENNAPEDIA"/>
    <property type="match status" value="1"/>
</dbReference>
<dbReference type="PROSITE" id="PS00027">
    <property type="entry name" value="HOMEOBOX_1"/>
    <property type="match status" value="1"/>
</dbReference>
<dbReference type="PROSITE" id="PS50071">
    <property type="entry name" value="HOMEOBOX_2"/>
    <property type="match status" value="1"/>
</dbReference>
<sequence length="417" mass="44580">MQKTTYYDNSTLFGGYSYQGANGFGYDAPAPAFQNSAHLEGDYQRSACSLQSLGTSAPPQPQHAKTKELNGSCMRPSLPPEHHPPPQVSPPQNTVNVAATNATQQPGGSGGGGGAGSGGTSKSSSKSSSMATNPTLTKQIFPWMKESRQNTKQKNSSPSASSANAESSGGEKSPPGSAASKRARTAYTSAQLVELEKEFHFNRYLCRPRRVEMANLLNLSERQIKIWFQNRRMKYKKDQKSKGIGSSSGGPSPTGSPPLPMQSSAGFMNSMHSMGSYDAPSPPSFNKPHQNAYAMSTAYQNPMKGCPPQQKYGNTPPDYDPHGLQGNSGNYGTPNMQGSPVYVGGNYVDAMPATGPSMYGLNHLPHHQSASMDYNGATQMSANQHHGPCDPHPTYTDLSAHHPSQGRIQEAPKLTHL</sequence>
<proteinExistence type="evidence at transcript level"/>
<gene>
    <name type="primary">hoxb3a</name>
    <name type="synonym">hoxb3</name>
    <name type="ORF">zgc:111819</name>
</gene>
<reference key="1">
    <citation type="submission" date="2003-01" db="EMBL/GenBank/DDBJ databases">
        <title>Ectopic expression of Hox paralog group 3 genes disrupts zebrafish hindbrain organization and craniofacial development in the absence of homeotic transformations.</title>
        <authorList>
            <person name="Hunter M.P."/>
            <person name="Prince V.E."/>
        </authorList>
    </citation>
    <scope>NUCLEOTIDE SEQUENCE [MRNA]</scope>
    <source>
        <tissue>Embryo</tissue>
    </source>
</reference>
<reference key="2">
    <citation type="journal article" date="2013" name="Nature">
        <title>The zebrafish reference genome sequence and its relationship to the human genome.</title>
        <authorList>
            <person name="Howe K."/>
            <person name="Clark M.D."/>
            <person name="Torroja C.F."/>
            <person name="Torrance J."/>
            <person name="Berthelot C."/>
            <person name="Muffato M."/>
            <person name="Collins J.E."/>
            <person name="Humphray S."/>
            <person name="McLaren K."/>
            <person name="Matthews L."/>
            <person name="McLaren S."/>
            <person name="Sealy I."/>
            <person name="Caccamo M."/>
            <person name="Churcher C."/>
            <person name="Scott C."/>
            <person name="Barrett J.C."/>
            <person name="Koch R."/>
            <person name="Rauch G.J."/>
            <person name="White S."/>
            <person name="Chow W."/>
            <person name="Kilian B."/>
            <person name="Quintais L.T."/>
            <person name="Guerra-Assuncao J.A."/>
            <person name="Zhou Y."/>
            <person name="Gu Y."/>
            <person name="Yen J."/>
            <person name="Vogel J.H."/>
            <person name="Eyre T."/>
            <person name="Redmond S."/>
            <person name="Banerjee R."/>
            <person name="Chi J."/>
            <person name="Fu B."/>
            <person name="Langley E."/>
            <person name="Maguire S.F."/>
            <person name="Laird G.K."/>
            <person name="Lloyd D."/>
            <person name="Kenyon E."/>
            <person name="Donaldson S."/>
            <person name="Sehra H."/>
            <person name="Almeida-King J."/>
            <person name="Loveland J."/>
            <person name="Trevanion S."/>
            <person name="Jones M."/>
            <person name="Quail M."/>
            <person name="Willey D."/>
            <person name="Hunt A."/>
            <person name="Burton J."/>
            <person name="Sims S."/>
            <person name="McLay K."/>
            <person name="Plumb B."/>
            <person name="Davis J."/>
            <person name="Clee C."/>
            <person name="Oliver K."/>
            <person name="Clark R."/>
            <person name="Riddle C."/>
            <person name="Elliot D."/>
            <person name="Threadgold G."/>
            <person name="Harden G."/>
            <person name="Ware D."/>
            <person name="Begum S."/>
            <person name="Mortimore B."/>
            <person name="Kerry G."/>
            <person name="Heath P."/>
            <person name="Phillimore B."/>
            <person name="Tracey A."/>
            <person name="Corby N."/>
            <person name="Dunn M."/>
            <person name="Johnson C."/>
            <person name="Wood J."/>
            <person name="Clark S."/>
            <person name="Pelan S."/>
            <person name="Griffiths G."/>
            <person name="Smith M."/>
            <person name="Glithero R."/>
            <person name="Howden P."/>
            <person name="Barker N."/>
            <person name="Lloyd C."/>
            <person name="Stevens C."/>
            <person name="Harley J."/>
            <person name="Holt K."/>
            <person name="Panagiotidis G."/>
            <person name="Lovell J."/>
            <person name="Beasley H."/>
            <person name="Henderson C."/>
            <person name="Gordon D."/>
            <person name="Auger K."/>
            <person name="Wright D."/>
            <person name="Collins J."/>
            <person name="Raisen C."/>
            <person name="Dyer L."/>
            <person name="Leung K."/>
            <person name="Robertson L."/>
            <person name="Ambridge K."/>
            <person name="Leongamornlert D."/>
            <person name="McGuire S."/>
            <person name="Gilderthorp R."/>
            <person name="Griffiths C."/>
            <person name="Manthravadi D."/>
            <person name="Nichol S."/>
            <person name="Barker G."/>
            <person name="Whitehead S."/>
            <person name="Kay M."/>
            <person name="Brown J."/>
            <person name="Murnane C."/>
            <person name="Gray E."/>
            <person name="Humphries M."/>
            <person name="Sycamore N."/>
            <person name="Barker D."/>
            <person name="Saunders D."/>
            <person name="Wallis J."/>
            <person name="Babbage A."/>
            <person name="Hammond S."/>
            <person name="Mashreghi-Mohammadi M."/>
            <person name="Barr L."/>
            <person name="Martin S."/>
            <person name="Wray P."/>
            <person name="Ellington A."/>
            <person name="Matthews N."/>
            <person name="Ellwood M."/>
            <person name="Woodmansey R."/>
            <person name="Clark G."/>
            <person name="Cooper J."/>
            <person name="Tromans A."/>
            <person name="Grafham D."/>
            <person name="Skuce C."/>
            <person name="Pandian R."/>
            <person name="Andrews R."/>
            <person name="Harrison E."/>
            <person name="Kimberley A."/>
            <person name="Garnett J."/>
            <person name="Fosker N."/>
            <person name="Hall R."/>
            <person name="Garner P."/>
            <person name="Kelly D."/>
            <person name="Bird C."/>
            <person name="Palmer S."/>
            <person name="Gehring I."/>
            <person name="Berger A."/>
            <person name="Dooley C.M."/>
            <person name="Ersan-Urun Z."/>
            <person name="Eser C."/>
            <person name="Geiger H."/>
            <person name="Geisler M."/>
            <person name="Karotki L."/>
            <person name="Kirn A."/>
            <person name="Konantz J."/>
            <person name="Konantz M."/>
            <person name="Oberlander M."/>
            <person name="Rudolph-Geiger S."/>
            <person name="Teucke M."/>
            <person name="Lanz C."/>
            <person name="Raddatz G."/>
            <person name="Osoegawa K."/>
            <person name="Zhu B."/>
            <person name="Rapp A."/>
            <person name="Widaa S."/>
            <person name="Langford C."/>
            <person name="Yang F."/>
            <person name="Schuster S.C."/>
            <person name="Carter N.P."/>
            <person name="Harrow J."/>
            <person name="Ning Z."/>
            <person name="Herrero J."/>
            <person name="Searle S.M."/>
            <person name="Enright A."/>
            <person name="Geisler R."/>
            <person name="Plasterk R.H."/>
            <person name="Lee C."/>
            <person name="Westerfield M."/>
            <person name="de Jong P.J."/>
            <person name="Zon L.I."/>
            <person name="Postlethwait J.H."/>
            <person name="Nusslein-Volhard C."/>
            <person name="Hubbard T.J."/>
            <person name="Roest Crollius H."/>
            <person name="Rogers J."/>
            <person name="Stemple D.L."/>
        </authorList>
    </citation>
    <scope>NUCLEOTIDE SEQUENCE [LARGE SCALE GENOMIC DNA]</scope>
    <source>
        <strain>Tuebingen</strain>
    </source>
</reference>
<reference key="3">
    <citation type="submission" date="2005-05" db="EMBL/GenBank/DDBJ databases">
        <authorList>
            <consortium name="NIH - Zebrafish Gene Collection (ZGC) project"/>
        </authorList>
    </citation>
    <scope>NUCLEOTIDE SEQUENCE [LARGE SCALE MRNA]</scope>
    <source>
        <tissue>Larva</tissue>
    </source>
</reference>
<reference key="4">
    <citation type="journal article" date="1998" name="Development">
        <title>Zebrafish hox genes: expression in the hindbrain region of wild-type and mutants of the segmentation gene, valentino.</title>
        <authorList>
            <person name="Prince V.E."/>
            <person name="Moens C.B."/>
            <person name="Kimmel C.B."/>
            <person name="Ho R.K."/>
        </authorList>
    </citation>
    <scope>NUCLEOTIDE SEQUENCE [MRNA] OF 208-417</scope>
    <scope>DEVELOPMENTAL STAGE</scope>
    <source>
        <tissue>Embryo</tissue>
    </source>
</reference>
<reference key="5">
    <citation type="submission" date="1999-07" db="EMBL/GenBank/DDBJ databases">
        <authorList>
            <person name="Prince V.E."/>
        </authorList>
    </citation>
    <scope>SEQUENCE REVISION</scope>
</reference>
<reference key="6">
    <citation type="journal article" date="2004" name="J. Exp. Zool. B Mol. Dev. Evol.">
        <title>Comparative genomic analysis of vertebrate Hox3 and Hox4 genes.</title>
        <authorList>
            <person name="Hadrys T."/>
            <person name="Prince V.E."/>
            <person name="Hunter M.P."/>
            <person name="Baker R."/>
            <person name="Rinkwitz S."/>
        </authorList>
    </citation>
    <scope>GENE STRUCTURE</scope>
</reference>
<protein>
    <recommendedName>
        <fullName>Homeobox protein Hox-B3a</fullName>
        <shortName>Hox-B3</shortName>
    </recommendedName>
</protein>
<feature type="chain" id="PRO_0000200120" description="Homeobox protein Hox-B3a">
    <location>
        <begin position="1"/>
        <end position="417"/>
    </location>
</feature>
<feature type="DNA-binding region" description="Homeobox" evidence="2">
    <location>
        <begin position="180"/>
        <end position="239"/>
    </location>
</feature>
<feature type="region of interest" description="Disordered" evidence="3">
    <location>
        <begin position="51"/>
        <end position="135"/>
    </location>
</feature>
<feature type="region of interest" description="Disordered" evidence="3">
    <location>
        <begin position="147"/>
        <end position="184"/>
    </location>
</feature>
<feature type="region of interest" description="Disordered" evidence="3">
    <location>
        <begin position="237"/>
        <end position="290"/>
    </location>
</feature>
<feature type="region of interest" description="Disordered" evidence="3">
    <location>
        <begin position="381"/>
        <end position="417"/>
    </location>
</feature>
<feature type="short sequence motif" description="Antp-type hexapeptide">
    <location>
        <begin position="140"/>
        <end position="145"/>
    </location>
</feature>
<feature type="compositionally biased region" description="Polar residues" evidence="3">
    <location>
        <begin position="93"/>
        <end position="106"/>
    </location>
</feature>
<feature type="compositionally biased region" description="Gly residues" evidence="3">
    <location>
        <begin position="107"/>
        <end position="119"/>
    </location>
</feature>
<feature type="compositionally biased region" description="Low complexity" evidence="3">
    <location>
        <begin position="120"/>
        <end position="129"/>
    </location>
</feature>
<feature type="compositionally biased region" description="Low complexity" evidence="3">
    <location>
        <begin position="154"/>
        <end position="180"/>
    </location>
</feature>
<feature type="compositionally biased region" description="Low complexity" evidence="3">
    <location>
        <begin position="243"/>
        <end position="253"/>
    </location>
</feature>
<feature type="compositionally biased region" description="Polar residues" evidence="3">
    <location>
        <begin position="261"/>
        <end position="273"/>
    </location>
</feature>
<feature type="sequence conflict" description="In Ref. 3; AAH95559." evidence="5" ref="3">
    <original>G</original>
    <variation>V</variation>
    <location>
        <position position="114"/>
    </location>
</feature>
<evidence type="ECO:0000250" key="1"/>
<evidence type="ECO:0000255" key="2">
    <source>
        <dbReference type="PROSITE-ProRule" id="PRU00108"/>
    </source>
</evidence>
<evidence type="ECO:0000256" key="3">
    <source>
        <dbReference type="SAM" id="MobiDB-lite"/>
    </source>
</evidence>
<evidence type="ECO:0000269" key="4">
    <source>
    </source>
</evidence>
<evidence type="ECO:0000305" key="5"/>
<name>HXB3A_DANRE</name>
<accession>O42368</accession>
<accession>Q4VBK5</accession>
<accession>Q8AWY5</accession>
<keyword id="KW-0217">Developmental protein</keyword>
<keyword id="KW-0238">DNA-binding</keyword>
<keyword id="KW-0371">Homeobox</keyword>
<keyword id="KW-0539">Nucleus</keyword>
<keyword id="KW-1185">Reference proteome</keyword>
<keyword id="KW-0804">Transcription</keyword>
<keyword id="KW-0805">Transcription regulation</keyword>
<comment type="function">
    <text evidence="1">Sequence-specific transcription factor which is part of a developmental regulatory system that provides cells with specific positional identities on the anterior-posterior axis.</text>
</comment>
<comment type="subcellular location">
    <subcellularLocation>
        <location>Nucleus</location>
    </subcellularLocation>
</comment>
<comment type="developmental stage">
    <text evidence="4">First expressed at the 1- to 2-somite stages posterior to rhombomere 5 (r5) of the developing hindbrain. By the 3- to 4-somite stages, the anterior expression limit is at the r4/r5 boundary. At 5- to 10-somite stages, expressed at high levels in r5 and r6. From the 20- to 30-somite stages, expressed weakly in r4.</text>
</comment>
<comment type="similarity">
    <text evidence="5">Belongs to the Antp homeobox family.</text>
</comment>
<organism>
    <name type="scientific">Danio rerio</name>
    <name type="common">Zebrafish</name>
    <name type="synonym">Brachydanio rerio</name>
    <dbReference type="NCBI Taxonomy" id="7955"/>
    <lineage>
        <taxon>Eukaryota</taxon>
        <taxon>Metazoa</taxon>
        <taxon>Chordata</taxon>
        <taxon>Craniata</taxon>
        <taxon>Vertebrata</taxon>
        <taxon>Euteleostomi</taxon>
        <taxon>Actinopterygii</taxon>
        <taxon>Neopterygii</taxon>
        <taxon>Teleostei</taxon>
        <taxon>Ostariophysi</taxon>
        <taxon>Cypriniformes</taxon>
        <taxon>Danionidae</taxon>
        <taxon>Danioninae</taxon>
        <taxon>Danio</taxon>
    </lineage>
</organism>